<gene>
    <name evidence="1" type="primary">hisF</name>
    <name type="ordered locus">Cla_0103</name>
</gene>
<reference key="1">
    <citation type="journal article" date="2008" name="Foodborne Pathog. Dis.">
        <title>The complete genome sequence and analysis of the human pathogen Campylobacter lari.</title>
        <authorList>
            <person name="Miller W.G."/>
            <person name="Wang G."/>
            <person name="Binnewies T.T."/>
            <person name="Parker C.T."/>
        </authorList>
    </citation>
    <scope>NUCLEOTIDE SEQUENCE [LARGE SCALE GENOMIC DNA]</scope>
    <source>
        <strain>RM2100 / D67 / ATCC BAA-1060</strain>
    </source>
</reference>
<organism>
    <name type="scientific">Campylobacter lari (strain RM2100 / D67 / ATCC BAA-1060)</name>
    <dbReference type="NCBI Taxonomy" id="306263"/>
    <lineage>
        <taxon>Bacteria</taxon>
        <taxon>Pseudomonadati</taxon>
        <taxon>Campylobacterota</taxon>
        <taxon>Epsilonproteobacteria</taxon>
        <taxon>Campylobacterales</taxon>
        <taxon>Campylobacteraceae</taxon>
        <taxon>Campylobacter</taxon>
    </lineage>
</organism>
<name>HIS6_CAMLR</name>
<dbReference type="EC" id="4.3.2.10" evidence="1"/>
<dbReference type="EMBL" id="CP000932">
    <property type="protein sequence ID" value="ACM63469.1"/>
    <property type="molecule type" value="Genomic_DNA"/>
</dbReference>
<dbReference type="RefSeq" id="WP_012660854.1">
    <property type="nucleotide sequence ID" value="NC_012039.1"/>
</dbReference>
<dbReference type="SMR" id="B9KEI4"/>
<dbReference type="STRING" id="306263.Cla_0103"/>
<dbReference type="KEGG" id="cla:CLA_0103"/>
<dbReference type="PATRIC" id="fig|306263.5.peg.103"/>
<dbReference type="eggNOG" id="COG0107">
    <property type="taxonomic scope" value="Bacteria"/>
</dbReference>
<dbReference type="HOGENOM" id="CLU_048577_4_0_7"/>
<dbReference type="UniPathway" id="UPA00031">
    <property type="reaction ID" value="UER00010"/>
</dbReference>
<dbReference type="Proteomes" id="UP000007727">
    <property type="component" value="Chromosome"/>
</dbReference>
<dbReference type="GO" id="GO:0005737">
    <property type="term" value="C:cytoplasm"/>
    <property type="evidence" value="ECO:0007669"/>
    <property type="project" value="UniProtKB-SubCell"/>
</dbReference>
<dbReference type="GO" id="GO:0000107">
    <property type="term" value="F:imidazoleglycerol-phosphate synthase activity"/>
    <property type="evidence" value="ECO:0007669"/>
    <property type="project" value="UniProtKB-UniRule"/>
</dbReference>
<dbReference type="GO" id="GO:0016829">
    <property type="term" value="F:lyase activity"/>
    <property type="evidence" value="ECO:0007669"/>
    <property type="project" value="UniProtKB-KW"/>
</dbReference>
<dbReference type="GO" id="GO:0000105">
    <property type="term" value="P:L-histidine biosynthetic process"/>
    <property type="evidence" value="ECO:0007669"/>
    <property type="project" value="UniProtKB-UniRule"/>
</dbReference>
<dbReference type="CDD" id="cd04731">
    <property type="entry name" value="HisF"/>
    <property type="match status" value="1"/>
</dbReference>
<dbReference type="FunFam" id="3.20.20.70:FF:000006">
    <property type="entry name" value="Imidazole glycerol phosphate synthase subunit HisF"/>
    <property type="match status" value="1"/>
</dbReference>
<dbReference type="Gene3D" id="3.20.20.70">
    <property type="entry name" value="Aldolase class I"/>
    <property type="match status" value="1"/>
</dbReference>
<dbReference type="HAMAP" id="MF_01013">
    <property type="entry name" value="HisF"/>
    <property type="match status" value="1"/>
</dbReference>
<dbReference type="InterPro" id="IPR013785">
    <property type="entry name" value="Aldolase_TIM"/>
</dbReference>
<dbReference type="InterPro" id="IPR006062">
    <property type="entry name" value="His_biosynth"/>
</dbReference>
<dbReference type="InterPro" id="IPR004651">
    <property type="entry name" value="HisF"/>
</dbReference>
<dbReference type="InterPro" id="IPR050064">
    <property type="entry name" value="IGPS_HisA/HisF"/>
</dbReference>
<dbReference type="InterPro" id="IPR011060">
    <property type="entry name" value="RibuloseP-bd_barrel"/>
</dbReference>
<dbReference type="NCBIfam" id="TIGR00735">
    <property type="entry name" value="hisF"/>
    <property type="match status" value="1"/>
</dbReference>
<dbReference type="PANTHER" id="PTHR21235:SF2">
    <property type="entry name" value="IMIDAZOLE GLYCEROL PHOSPHATE SYNTHASE HISHF"/>
    <property type="match status" value="1"/>
</dbReference>
<dbReference type="PANTHER" id="PTHR21235">
    <property type="entry name" value="IMIDAZOLE GLYCEROL PHOSPHATE SYNTHASE SUBUNIT HISF/H IGP SYNTHASE SUBUNIT HISF/H"/>
    <property type="match status" value="1"/>
</dbReference>
<dbReference type="Pfam" id="PF00977">
    <property type="entry name" value="His_biosynth"/>
    <property type="match status" value="1"/>
</dbReference>
<dbReference type="SUPFAM" id="SSF51366">
    <property type="entry name" value="Ribulose-phoshate binding barrel"/>
    <property type="match status" value="1"/>
</dbReference>
<accession>B9KEI4</accession>
<proteinExistence type="inferred from homology"/>
<protein>
    <recommendedName>
        <fullName evidence="1">Imidazole glycerol phosphate synthase subunit HisF</fullName>
        <ecNumber evidence="1">4.3.2.10</ecNumber>
    </recommendedName>
    <alternativeName>
        <fullName evidence="1">IGP synthase cyclase subunit</fullName>
    </alternativeName>
    <alternativeName>
        <fullName evidence="1">IGP synthase subunit HisF</fullName>
    </alternativeName>
    <alternativeName>
        <fullName evidence="1">ImGP synthase subunit HisF</fullName>
        <shortName evidence="1">IGPS subunit HisF</shortName>
    </alternativeName>
</protein>
<sequence length="255" mass="28142">MLTKRIIACLDVKDGRVVKGMQFKNHEDMGDVIELAKFYSQNGIDELVFYDITASAKNERINRAWVSKVAQNISIPFCVAGGIKSEDDAKELLANGADKISINSPALNDPDLISRLAKSFGVQCVVVGIDTFKDENNELLVYKYTGDENKSHHSGKKTLEWVKQVCELGAGEIVLNMMNQDGMRKGYDLDQLTKVRQICPVPLVASGGAGAKEHFLDAFKLGVDGALAASVFHKKLIDIKELKLFLKDQGIQIRI</sequence>
<comment type="function">
    <text evidence="1">IGPS catalyzes the conversion of PRFAR and glutamine to IGP, AICAR and glutamate. The HisF subunit catalyzes the cyclization activity that produces IGP and AICAR from PRFAR using the ammonia provided by the HisH subunit.</text>
</comment>
<comment type="catalytic activity">
    <reaction evidence="1">
        <text>5-[(5-phospho-1-deoxy-D-ribulos-1-ylimino)methylamino]-1-(5-phospho-beta-D-ribosyl)imidazole-4-carboxamide + L-glutamine = D-erythro-1-(imidazol-4-yl)glycerol 3-phosphate + 5-amino-1-(5-phospho-beta-D-ribosyl)imidazole-4-carboxamide + L-glutamate + H(+)</text>
        <dbReference type="Rhea" id="RHEA:24793"/>
        <dbReference type="ChEBI" id="CHEBI:15378"/>
        <dbReference type="ChEBI" id="CHEBI:29985"/>
        <dbReference type="ChEBI" id="CHEBI:58278"/>
        <dbReference type="ChEBI" id="CHEBI:58359"/>
        <dbReference type="ChEBI" id="CHEBI:58475"/>
        <dbReference type="ChEBI" id="CHEBI:58525"/>
        <dbReference type="EC" id="4.3.2.10"/>
    </reaction>
</comment>
<comment type="pathway">
    <text evidence="1">Amino-acid biosynthesis; L-histidine biosynthesis; L-histidine from 5-phospho-alpha-D-ribose 1-diphosphate: step 5/9.</text>
</comment>
<comment type="subunit">
    <text evidence="1">Heterodimer of HisH and HisF.</text>
</comment>
<comment type="subcellular location">
    <subcellularLocation>
        <location evidence="1">Cytoplasm</location>
    </subcellularLocation>
</comment>
<comment type="similarity">
    <text evidence="1">Belongs to the HisA/HisF family.</text>
</comment>
<keyword id="KW-0028">Amino-acid biosynthesis</keyword>
<keyword id="KW-0963">Cytoplasm</keyword>
<keyword id="KW-0368">Histidine biosynthesis</keyword>
<keyword id="KW-0456">Lyase</keyword>
<keyword id="KW-1185">Reference proteome</keyword>
<feature type="chain" id="PRO_1000148909" description="Imidazole glycerol phosphate synthase subunit HisF">
    <location>
        <begin position="1"/>
        <end position="255"/>
    </location>
</feature>
<feature type="active site" evidence="1">
    <location>
        <position position="11"/>
    </location>
</feature>
<feature type="active site" evidence="1">
    <location>
        <position position="130"/>
    </location>
</feature>
<evidence type="ECO:0000255" key="1">
    <source>
        <dbReference type="HAMAP-Rule" id="MF_01013"/>
    </source>
</evidence>